<sequence>MIQTESRLEVADNTGAREVMCIKVLGGSKRRYASIGDIIKVSVKEATPRGRVKKGEIYNAVVVRTAKGVRRQDGSLIKFDGNAAVLLNNKLEPIGTRIFGPVTRELRSERFMKIVSLAPEVL</sequence>
<gene>
    <name evidence="1" type="primary">rplN</name>
    <name type="ordered locus">BMASAVP1_A3159</name>
</gene>
<evidence type="ECO:0000255" key="1">
    <source>
        <dbReference type="HAMAP-Rule" id="MF_01367"/>
    </source>
</evidence>
<evidence type="ECO:0000305" key="2"/>
<feature type="chain" id="PRO_1000055535" description="Large ribosomal subunit protein uL14">
    <location>
        <begin position="1"/>
        <end position="122"/>
    </location>
</feature>
<organism>
    <name type="scientific">Burkholderia mallei (strain SAVP1)</name>
    <dbReference type="NCBI Taxonomy" id="320388"/>
    <lineage>
        <taxon>Bacteria</taxon>
        <taxon>Pseudomonadati</taxon>
        <taxon>Pseudomonadota</taxon>
        <taxon>Betaproteobacteria</taxon>
        <taxon>Burkholderiales</taxon>
        <taxon>Burkholderiaceae</taxon>
        <taxon>Burkholderia</taxon>
        <taxon>pseudomallei group</taxon>
    </lineage>
</organism>
<keyword id="KW-0687">Ribonucleoprotein</keyword>
<keyword id="KW-0689">Ribosomal protein</keyword>
<keyword id="KW-0694">RNA-binding</keyword>
<keyword id="KW-0699">rRNA-binding</keyword>
<accession>A1V893</accession>
<name>RL14_BURMS</name>
<protein>
    <recommendedName>
        <fullName evidence="1">Large ribosomal subunit protein uL14</fullName>
    </recommendedName>
    <alternativeName>
        <fullName evidence="2">50S ribosomal protein L14</fullName>
    </alternativeName>
</protein>
<reference key="1">
    <citation type="journal article" date="2010" name="Genome Biol. Evol.">
        <title>Continuing evolution of Burkholderia mallei through genome reduction and large-scale rearrangements.</title>
        <authorList>
            <person name="Losada L."/>
            <person name="Ronning C.M."/>
            <person name="DeShazer D."/>
            <person name="Woods D."/>
            <person name="Fedorova N."/>
            <person name="Kim H.S."/>
            <person name="Shabalina S.A."/>
            <person name="Pearson T.R."/>
            <person name="Brinkac L."/>
            <person name="Tan P."/>
            <person name="Nandi T."/>
            <person name="Crabtree J."/>
            <person name="Badger J."/>
            <person name="Beckstrom-Sternberg S."/>
            <person name="Saqib M."/>
            <person name="Schutzer S.E."/>
            <person name="Keim P."/>
            <person name="Nierman W.C."/>
        </authorList>
    </citation>
    <scope>NUCLEOTIDE SEQUENCE [LARGE SCALE GENOMIC DNA]</scope>
    <source>
        <strain>SAVP1</strain>
    </source>
</reference>
<comment type="function">
    <text evidence="1">Binds to 23S rRNA. Forms part of two intersubunit bridges in the 70S ribosome.</text>
</comment>
<comment type="subunit">
    <text evidence="1">Part of the 50S ribosomal subunit. Forms a cluster with proteins L3 and L19. In the 70S ribosome, L14 and L19 interact and together make contacts with the 16S rRNA in bridges B5 and B8.</text>
</comment>
<comment type="similarity">
    <text evidence="1">Belongs to the universal ribosomal protein uL14 family.</text>
</comment>
<dbReference type="EMBL" id="CP000526">
    <property type="protein sequence ID" value="ABM51180.1"/>
    <property type="molecule type" value="Genomic_DNA"/>
</dbReference>
<dbReference type="RefSeq" id="WP_004197951.1">
    <property type="nucleotide sequence ID" value="NC_008785.1"/>
</dbReference>
<dbReference type="SMR" id="A1V893"/>
<dbReference type="GeneID" id="93171007"/>
<dbReference type="KEGG" id="bmv:BMASAVP1_A3159"/>
<dbReference type="HOGENOM" id="CLU_095071_2_1_4"/>
<dbReference type="GO" id="GO:0022625">
    <property type="term" value="C:cytosolic large ribosomal subunit"/>
    <property type="evidence" value="ECO:0007669"/>
    <property type="project" value="TreeGrafter"/>
</dbReference>
<dbReference type="GO" id="GO:0070180">
    <property type="term" value="F:large ribosomal subunit rRNA binding"/>
    <property type="evidence" value="ECO:0007669"/>
    <property type="project" value="TreeGrafter"/>
</dbReference>
<dbReference type="GO" id="GO:0003735">
    <property type="term" value="F:structural constituent of ribosome"/>
    <property type="evidence" value="ECO:0007669"/>
    <property type="project" value="InterPro"/>
</dbReference>
<dbReference type="GO" id="GO:0006412">
    <property type="term" value="P:translation"/>
    <property type="evidence" value="ECO:0007669"/>
    <property type="project" value="UniProtKB-UniRule"/>
</dbReference>
<dbReference type="CDD" id="cd00337">
    <property type="entry name" value="Ribosomal_uL14"/>
    <property type="match status" value="1"/>
</dbReference>
<dbReference type="FunFam" id="2.40.150.20:FF:000001">
    <property type="entry name" value="50S ribosomal protein L14"/>
    <property type="match status" value="1"/>
</dbReference>
<dbReference type="Gene3D" id="2.40.150.20">
    <property type="entry name" value="Ribosomal protein L14"/>
    <property type="match status" value="1"/>
</dbReference>
<dbReference type="HAMAP" id="MF_01367">
    <property type="entry name" value="Ribosomal_uL14"/>
    <property type="match status" value="1"/>
</dbReference>
<dbReference type="InterPro" id="IPR000218">
    <property type="entry name" value="Ribosomal_uL14"/>
</dbReference>
<dbReference type="InterPro" id="IPR005745">
    <property type="entry name" value="Ribosomal_uL14_bac-type"/>
</dbReference>
<dbReference type="InterPro" id="IPR019972">
    <property type="entry name" value="Ribosomal_uL14_CS"/>
</dbReference>
<dbReference type="InterPro" id="IPR036853">
    <property type="entry name" value="Ribosomal_uL14_sf"/>
</dbReference>
<dbReference type="NCBIfam" id="TIGR01067">
    <property type="entry name" value="rplN_bact"/>
    <property type="match status" value="1"/>
</dbReference>
<dbReference type="PANTHER" id="PTHR11761">
    <property type="entry name" value="50S/60S RIBOSOMAL PROTEIN L14/L23"/>
    <property type="match status" value="1"/>
</dbReference>
<dbReference type="PANTHER" id="PTHR11761:SF3">
    <property type="entry name" value="LARGE RIBOSOMAL SUBUNIT PROTEIN UL14M"/>
    <property type="match status" value="1"/>
</dbReference>
<dbReference type="Pfam" id="PF00238">
    <property type="entry name" value="Ribosomal_L14"/>
    <property type="match status" value="1"/>
</dbReference>
<dbReference type="SMART" id="SM01374">
    <property type="entry name" value="Ribosomal_L14"/>
    <property type="match status" value="1"/>
</dbReference>
<dbReference type="SUPFAM" id="SSF50193">
    <property type="entry name" value="Ribosomal protein L14"/>
    <property type="match status" value="1"/>
</dbReference>
<dbReference type="PROSITE" id="PS00049">
    <property type="entry name" value="RIBOSOMAL_L14"/>
    <property type="match status" value="1"/>
</dbReference>
<proteinExistence type="inferred from homology"/>